<name>NS3_ADVG</name>
<sequence length="87" mass="10181">MAQAQIDEQRRLQDLYVQLKKEINDGEGVAWLFQQKTYTDKDNKPTKATPPLRTTSSDLRLCDCNKQHQHNQSNCWMCGNKRSRRAT</sequence>
<reference key="1">
    <citation type="journal article" date="1988" name="J. Virol.">
        <title>Nucleotide sequence and genomic organization of Aleutian mink disease parvovirus (ADV): sequence comparisons between a nonpathogenic and a pathogenic strain of ADV.</title>
        <authorList>
            <person name="Bloom M.E."/>
            <person name="Alexandersen S."/>
            <person name="Perryman S."/>
            <person name="Lechner D."/>
            <person name="Wolfinbarger J.B."/>
        </authorList>
    </citation>
    <scope>NUCLEOTIDE SEQUENCE [GENOMIC DNA]</scope>
</reference>
<reference key="2">
    <citation type="journal article" date="2012" name="Virology">
        <title>Internal polyadenylation of parvoviral precursor mRNA limits progeny virus production.</title>
        <authorList>
            <person name="Huang Q."/>
            <person name="Deng X."/>
            <person name="Best S.M."/>
            <person name="Bloom M.E."/>
            <person name="Li Y."/>
            <person name="Qiu J."/>
        </authorList>
    </citation>
    <scope>NUCLEOTIDE SEQUENCE [GENOMIC DNA]</scope>
</reference>
<reference key="3">
    <citation type="journal article" date="2014" name="Virology">
        <title>Molecular characterization of the small nonstructural proteins of parvovirus Aleutian mink disease virus (AMDV) during infection.</title>
        <authorList>
            <person name="Huang Q."/>
            <person name="Luo Y."/>
            <person name="Cheng F."/>
            <person name="Best S.M."/>
            <person name="Bloom M.E."/>
            <person name="Qiu J."/>
        </authorList>
    </citation>
    <scope>FUNCTION</scope>
    <scope>SUBCELLULAR LOCATION</scope>
</reference>
<protein>
    <recommendedName>
        <fullName>Non-structural protein NS3</fullName>
    </recommendedName>
</protein>
<organismHost>
    <name type="scientific">Mustela</name>
    <dbReference type="NCBI Taxonomy" id="9665"/>
</organismHost>
<keyword id="KW-1048">Host nucleus</keyword>
<keyword id="KW-1185">Reference proteome</keyword>
<comment type="function">
    <text evidence="1">Plays a role in viral DNA replication.</text>
</comment>
<comment type="subcellular location">
    <subcellularLocation>
        <location evidence="1">Host nucleus</location>
    </subcellularLocation>
    <text>Does not localize within the viral DNA replication centers.</text>
</comment>
<comment type="sequence caution" evidence="2">
    <conflict type="erroneous gene model prediction">
        <sequence resource="EMBL-CDS" id="AAA66614"/>
    </conflict>
</comment>
<proteinExistence type="predicted"/>
<feature type="chain" id="PRO_0000429000" description="Non-structural protein NS3">
    <location>
        <begin position="1"/>
        <end position="87"/>
    </location>
</feature>
<accession>Q84362</accession>
<accession>G1E7B3</accession>
<dbReference type="EMBL" id="M20036">
    <property type="protein sequence ID" value="AAA66614.1"/>
    <property type="status" value="ALT_SEQ"/>
    <property type="molecule type" value="Genomic_DNA"/>
</dbReference>
<dbReference type="EMBL" id="JN040434">
    <property type="protein sequence ID" value="AEK27533.1"/>
    <property type="molecule type" value="Genomic_DNA"/>
</dbReference>
<dbReference type="PIR" id="C36760">
    <property type="entry name" value="C36760"/>
</dbReference>
<dbReference type="RefSeq" id="NP_042874.1">
    <property type="nucleotide sequence ID" value="NC_001662.1"/>
</dbReference>
<dbReference type="SMR" id="Q84362"/>
<dbReference type="GeneID" id="1494588"/>
<dbReference type="KEGG" id="vg:1494588"/>
<dbReference type="Proteomes" id="UP000008470">
    <property type="component" value="Segment"/>
</dbReference>
<dbReference type="GO" id="GO:0042025">
    <property type="term" value="C:host cell nucleus"/>
    <property type="evidence" value="ECO:0000314"/>
    <property type="project" value="CACAO"/>
</dbReference>
<dbReference type="InterPro" id="IPR020960">
    <property type="entry name" value="ADV_NS1-3"/>
</dbReference>
<dbReference type="Pfam" id="PF12475">
    <property type="entry name" value="Amdo_NSP_1-3"/>
    <property type="match status" value="1"/>
</dbReference>
<organism>
    <name type="scientific">Aleutian mink disease parvovirus (strain G)</name>
    <name type="common">ADV</name>
    <dbReference type="NCBI Taxonomy" id="10783"/>
    <lineage>
        <taxon>Viruses</taxon>
        <taxon>Monodnaviria</taxon>
        <taxon>Shotokuvirae</taxon>
        <taxon>Cossaviricota</taxon>
        <taxon>Quintoviricetes</taxon>
        <taxon>Piccovirales</taxon>
        <taxon>Parvoviridae</taxon>
        <taxon>Parvovirinae</taxon>
        <taxon>Amdoparvovirus</taxon>
        <taxon>Amdoparvovirus carnivoran1</taxon>
    </lineage>
</organism>
<evidence type="ECO:0000269" key="1">
    <source>
    </source>
</evidence>
<evidence type="ECO:0000305" key="2"/>